<organism>
    <name type="scientific">Pyrobaculum calidifontis (strain DSM 21063 / JCM 11548 / VA1)</name>
    <dbReference type="NCBI Taxonomy" id="410359"/>
    <lineage>
        <taxon>Archaea</taxon>
        <taxon>Thermoproteota</taxon>
        <taxon>Thermoprotei</taxon>
        <taxon>Thermoproteales</taxon>
        <taxon>Thermoproteaceae</taxon>
        <taxon>Pyrobaculum</taxon>
    </lineage>
</organism>
<dbReference type="EMBL" id="CP000561">
    <property type="protein sequence ID" value="ABO09149.1"/>
    <property type="molecule type" value="Genomic_DNA"/>
</dbReference>
<dbReference type="RefSeq" id="WP_011850408.1">
    <property type="nucleotide sequence ID" value="NC_009073.1"/>
</dbReference>
<dbReference type="PDB" id="9E71">
    <property type="method" value="EM"/>
    <property type="resolution" value="2.36 A"/>
    <property type="chains" value="BJ=1-131"/>
</dbReference>
<dbReference type="PDB" id="9E7F">
    <property type="method" value="EM"/>
    <property type="resolution" value="2.53 A"/>
    <property type="chains" value="BJ=1-131"/>
</dbReference>
<dbReference type="PDBsum" id="9E71"/>
<dbReference type="PDBsum" id="9E7F"/>
<dbReference type="EMDB" id="EMD-47628"/>
<dbReference type="EMDB" id="EMD-47668"/>
<dbReference type="SMR" id="A3MWY2"/>
<dbReference type="STRING" id="410359.Pcal_1732"/>
<dbReference type="GeneID" id="4909783"/>
<dbReference type="KEGG" id="pcl:Pcal_1732"/>
<dbReference type="eggNOG" id="arCOG04154">
    <property type="taxonomic scope" value="Archaea"/>
</dbReference>
<dbReference type="HOGENOM" id="CLU_080597_2_1_2"/>
<dbReference type="OrthoDB" id="372305at2157"/>
<dbReference type="Proteomes" id="UP000001431">
    <property type="component" value="Chromosome"/>
</dbReference>
<dbReference type="GO" id="GO:1990904">
    <property type="term" value="C:ribonucleoprotein complex"/>
    <property type="evidence" value="ECO:0007669"/>
    <property type="project" value="UniProtKB-KW"/>
</dbReference>
<dbReference type="GO" id="GO:0005840">
    <property type="term" value="C:ribosome"/>
    <property type="evidence" value="ECO:0007669"/>
    <property type="project" value="UniProtKB-KW"/>
</dbReference>
<dbReference type="GO" id="GO:0003735">
    <property type="term" value="F:structural constituent of ribosome"/>
    <property type="evidence" value="ECO:0007669"/>
    <property type="project" value="InterPro"/>
</dbReference>
<dbReference type="GO" id="GO:0006412">
    <property type="term" value="P:translation"/>
    <property type="evidence" value="ECO:0007669"/>
    <property type="project" value="UniProtKB-UniRule"/>
</dbReference>
<dbReference type="CDD" id="cd11382">
    <property type="entry name" value="Ribosomal_S8e"/>
    <property type="match status" value="1"/>
</dbReference>
<dbReference type="FunFam" id="2.40.10.310:FF:000002">
    <property type="entry name" value="30S ribosomal protein S8e"/>
    <property type="match status" value="1"/>
</dbReference>
<dbReference type="Gene3D" id="2.40.10.310">
    <property type="match status" value="1"/>
</dbReference>
<dbReference type="HAMAP" id="MF_00029">
    <property type="entry name" value="Ribosomal_eS8"/>
    <property type="match status" value="1"/>
</dbReference>
<dbReference type="InterPro" id="IPR001047">
    <property type="entry name" value="Ribosomal_eS8"/>
</dbReference>
<dbReference type="InterPro" id="IPR020919">
    <property type="entry name" value="Ribosomal_protein_eS8_arc"/>
</dbReference>
<dbReference type="InterPro" id="IPR022309">
    <property type="entry name" value="Ribosomal_Se8/biogenesis_NSA2"/>
</dbReference>
<dbReference type="NCBIfam" id="TIGR00307">
    <property type="entry name" value="eS8"/>
    <property type="match status" value="1"/>
</dbReference>
<dbReference type="PANTHER" id="PTHR10394">
    <property type="entry name" value="40S RIBOSOMAL PROTEIN S8"/>
    <property type="match status" value="1"/>
</dbReference>
<dbReference type="Pfam" id="PF01201">
    <property type="entry name" value="Ribosomal_S8e"/>
    <property type="match status" value="1"/>
</dbReference>
<sequence length="131" mass="14416">MKLGAFYKGGDLVKPSGGKKGRVRKTKKKALGGGPPQIPKLGEEDIRYVERVRGGNHKVRLRQARYANVYIPKERRHVKAKILSIVSSPSNPDYARRNYIVKGAIIQTEVGKAVVTSRPGQDGVINAVLIE</sequence>
<protein>
    <recommendedName>
        <fullName evidence="1">Small ribosomal subunit protein eS8</fullName>
    </recommendedName>
    <alternativeName>
        <fullName evidence="3">30S ribosomal protein S8e</fullName>
    </alternativeName>
</protein>
<name>RS8E_PYRCJ</name>
<feature type="chain" id="PRO_0000304178" description="Small ribosomal subunit protein eS8">
    <location>
        <begin position="1"/>
        <end position="131"/>
    </location>
</feature>
<feature type="region of interest" description="Disordered" evidence="2">
    <location>
        <begin position="15"/>
        <end position="36"/>
    </location>
</feature>
<feature type="compositionally biased region" description="Basic residues" evidence="2">
    <location>
        <begin position="17"/>
        <end position="30"/>
    </location>
</feature>
<keyword id="KW-0002">3D-structure</keyword>
<keyword id="KW-0687">Ribonucleoprotein</keyword>
<keyword id="KW-0689">Ribosomal protein</keyword>
<reference key="1">
    <citation type="submission" date="2007-02" db="EMBL/GenBank/DDBJ databases">
        <title>Complete sequence of Pyrobaculum calidifontis JCM 11548.</title>
        <authorList>
            <consortium name="US DOE Joint Genome Institute"/>
            <person name="Copeland A."/>
            <person name="Lucas S."/>
            <person name="Lapidus A."/>
            <person name="Barry K."/>
            <person name="Glavina del Rio T."/>
            <person name="Dalin E."/>
            <person name="Tice H."/>
            <person name="Pitluck S."/>
            <person name="Chain P."/>
            <person name="Malfatti S."/>
            <person name="Shin M."/>
            <person name="Vergez L."/>
            <person name="Schmutz J."/>
            <person name="Larimer F."/>
            <person name="Land M."/>
            <person name="Hauser L."/>
            <person name="Kyrpides N."/>
            <person name="Mikhailova N."/>
            <person name="Cozen A.E."/>
            <person name="Fitz-Gibbon S.T."/>
            <person name="House C.H."/>
            <person name="Saltikov C."/>
            <person name="Lowe T.M."/>
            <person name="Richardson P."/>
        </authorList>
    </citation>
    <scope>NUCLEOTIDE SEQUENCE [LARGE SCALE GENOMIC DNA]</scope>
    <source>
        <strain>DSM 21063 / JCM 11548 / VA1</strain>
    </source>
</reference>
<gene>
    <name evidence="1" type="primary">rps8e</name>
    <name type="ordered locus">Pcal_1732</name>
</gene>
<evidence type="ECO:0000255" key="1">
    <source>
        <dbReference type="HAMAP-Rule" id="MF_00029"/>
    </source>
</evidence>
<evidence type="ECO:0000256" key="2">
    <source>
        <dbReference type="SAM" id="MobiDB-lite"/>
    </source>
</evidence>
<evidence type="ECO:0000305" key="3"/>
<accession>A3MWY2</accession>
<comment type="subunit">
    <text evidence="1">Part of the 30S ribosomal subunit.</text>
</comment>
<comment type="similarity">
    <text evidence="1">Belongs to the eukaryotic ribosomal protein eS8 family.</text>
</comment>
<proteinExistence type="evidence at protein level"/>